<accession>Q7WQL6</accession>
<organism>
    <name type="scientific">Bordetella bronchiseptica (strain ATCC BAA-588 / NCTC 13252 / RB50)</name>
    <name type="common">Alcaligenes bronchisepticus</name>
    <dbReference type="NCBI Taxonomy" id="257310"/>
    <lineage>
        <taxon>Bacteria</taxon>
        <taxon>Pseudomonadati</taxon>
        <taxon>Pseudomonadota</taxon>
        <taxon>Betaproteobacteria</taxon>
        <taxon>Burkholderiales</taxon>
        <taxon>Alcaligenaceae</taxon>
        <taxon>Bordetella</taxon>
    </lineage>
</organism>
<protein>
    <recommendedName>
        <fullName evidence="1">Large ribosomal subunit protein bL21</fullName>
    </recommendedName>
    <alternativeName>
        <fullName evidence="2">50S ribosomal protein L21</fullName>
    </alternativeName>
</protein>
<evidence type="ECO:0000255" key="1">
    <source>
        <dbReference type="HAMAP-Rule" id="MF_01363"/>
    </source>
</evidence>
<evidence type="ECO:0000305" key="2"/>
<gene>
    <name evidence="1" type="primary">rplU</name>
    <name type="ordered locus">BB0314</name>
</gene>
<reference key="1">
    <citation type="journal article" date="2003" name="Nat. Genet.">
        <title>Comparative analysis of the genome sequences of Bordetella pertussis, Bordetella parapertussis and Bordetella bronchiseptica.</title>
        <authorList>
            <person name="Parkhill J."/>
            <person name="Sebaihia M."/>
            <person name="Preston A."/>
            <person name="Murphy L.D."/>
            <person name="Thomson N.R."/>
            <person name="Harris D.E."/>
            <person name="Holden M.T.G."/>
            <person name="Churcher C.M."/>
            <person name="Bentley S.D."/>
            <person name="Mungall K.L."/>
            <person name="Cerdeno-Tarraga A.-M."/>
            <person name="Temple L."/>
            <person name="James K.D."/>
            <person name="Harris B."/>
            <person name="Quail M.A."/>
            <person name="Achtman M."/>
            <person name="Atkin R."/>
            <person name="Baker S."/>
            <person name="Basham D."/>
            <person name="Bason N."/>
            <person name="Cherevach I."/>
            <person name="Chillingworth T."/>
            <person name="Collins M."/>
            <person name="Cronin A."/>
            <person name="Davis P."/>
            <person name="Doggett J."/>
            <person name="Feltwell T."/>
            <person name="Goble A."/>
            <person name="Hamlin N."/>
            <person name="Hauser H."/>
            <person name="Holroyd S."/>
            <person name="Jagels K."/>
            <person name="Leather S."/>
            <person name="Moule S."/>
            <person name="Norberczak H."/>
            <person name="O'Neil S."/>
            <person name="Ormond D."/>
            <person name="Price C."/>
            <person name="Rabbinowitsch E."/>
            <person name="Rutter S."/>
            <person name="Sanders M."/>
            <person name="Saunders D."/>
            <person name="Seeger K."/>
            <person name="Sharp S."/>
            <person name="Simmonds M."/>
            <person name="Skelton J."/>
            <person name="Squares R."/>
            <person name="Squares S."/>
            <person name="Stevens K."/>
            <person name="Unwin L."/>
            <person name="Whitehead S."/>
            <person name="Barrell B.G."/>
            <person name="Maskell D.J."/>
        </authorList>
    </citation>
    <scope>NUCLEOTIDE SEQUENCE [LARGE SCALE GENOMIC DNA]</scope>
    <source>
        <strain>ATCC BAA-588 / NCTC 13252 / RB50</strain>
    </source>
</reference>
<comment type="function">
    <text evidence="1">This protein binds to 23S rRNA in the presence of protein L20.</text>
</comment>
<comment type="subunit">
    <text evidence="1">Part of the 50S ribosomal subunit. Contacts protein L20.</text>
</comment>
<comment type="similarity">
    <text evidence="1">Belongs to the bacterial ribosomal protein bL21 family.</text>
</comment>
<sequence length="103" mass="11547">MYAVIKTGGKQYRVATGEKLKVEQIPADIGQEITLDQVLSVGEGDQLKVGTPLVSGAVVKATVLAHGRHDKIKIFKMRRRKHYQKHQGHRQNYTEIRIEAITA</sequence>
<keyword id="KW-0687">Ribonucleoprotein</keyword>
<keyword id="KW-0689">Ribosomal protein</keyword>
<keyword id="KW-0694">RNA-binding</keyword>
<keyword id="KW-0699">rRNA-binding</keyword>
<feature type="chain" id="PRO_0000269286" description="Large ribosomal subunit protein bL21">
    <location>
        <begin position="1"/>
        <end position="103"/>
    </location>
</feature>
<name>RL21_BORBR</name>
<dbReference type="EMBL" id="BX640437">
    <property type="protein sequence ID" value="CAE30812.1"/>
    <property type="molecule type" value="Genomic_DNA"/>
</dbReference>
<dbReference type="RefSeq" id="WP_003807462.1">
    <property type="nucleotide sequence ID" value="NC_002927.3"/>
</dbReference>
<dbReference type="SMR" id="Q7WQL6"/>
<dbReference type="GeneID" id="93206542"/>
<dbReference type="KEGG" id="bbr:BB0314"/>
<dbReference type="eggNOG" id="COG0261">
    <property type="taxonomic scope" value="Bacteria"/>
</dbReference>
<dbReference type="HOGENOM" id="CLU_061463_3_2_4"/>
<dbReference type="Proteomes" id="UP000001027">
    <property type="component" value="Chromosome"/>
</dbReference>
<dbReference type="GO" id="GO:0005737">
    <property type="term" value="C:cytoplasm"/>
    <property type="evidence" value="ECO:0007669"/>
    <property type="project" value="UniProtKB-ARBA"/>
</dbReference>
<dbReference type="GO" id="GO:1990904">
    <property type="term" value="C:ribonucleoprotein complex"/>
    <property type="evidence" value="ECO:0007669"/>
    <property type="project" value="UniProtKB-KW"/>
</dbReference>
<dbReference type="GO" id="GO:0005840">
    <property type="term" value="C:ribosome"/>
    <property type="evidence" value="ECO:0007669"/>
    <property type="project" value="UniProtKB-KW"/>
</dbReference>
<dbReference type="GO" id="GO:0019843">
    <property type="term" value="F:rRNA binding"/>
    <property type="evidence" value="ECO:0007669"/>
    <property type="project" value="UniProtKB-UniRule"/>
</dbReference>
<dbReference type="GO" id="GO:0003735">
    <property type="term" value="F:structural constituent of ribosome"/>
    <property type="evidence" value="ECO:0007669"/>
    <property type="project" value="InterPro"/>
</dbReference>
<dbReference type="GO" id="GO:0006412">
    <property type="term" value="P:translation"/>
    <property type="evidence" value="ECO:0007669"/>
    <property type="project" value="UniProtKB-UniRule"/>
</dbReference>
<dbReference type="HAMAP" id="MF_01363">
    <property type="entry name" value="Ribosomal_bL21"/>
    <property type="match status" value="1"/>
</dbReference>
<dbReference type="InterPro" id="IPR028909">
    <property type="entry name" value="bL21-like"/>
</dbReference>
<dbReference type="InterPro" id="IPR036164">
    <property type="entry name" value="bL21-like_sf"/>
</dbReference>
<dbReference type="InterPro" id="IPR001787">
    <property type="entry name" value="Ribosomal_bL21"/>
</dbReference>
<dbReference type="InterPro" id="IPR018258">
    <property type="entry name" value="Ribosomal_bL21_CS"/>
</dbReference>
<dbReference type="NCBIfam" id="TIGR00061">
    <property type="entry name" value="L21"/>
    <property type="match status" value="1"/>
</dbReference>
<dbReference type="PANTHER" id="PTHR21349">
    <property type="entry name" value="50S RIBOSOMAL PROTEIN L21"/>
    <property type="match status" value="1"/>
</dbReference>
<dbReference type="PANTHER" id="PTHR21349:SF0">
    <property type="entry name" value="LARGE RIBOSOMAL SUBUNIT PROTEIN BL21M"/>
    <property type="match status" value="1"/>
</dbReference>
<dbReference type="Pfam" id="PF00829">
    <property type="entry name" value="Ribosomal_L21p"/>
    <property type="match status" value="1"/>
</dbReference>
<dbReference type="SUPFAM" id="SSF141091">
    <property type="entry name" value="L21p-like"/>
    <property type="match status" value="1"/>
</dbReference>
<dbReference type="PROSITE" id="PS01169">
    <property type="entry name" value="RIBOSOMAL_L21"/>
    <property type="match status" value="1"/>
</dbReference>
<proteinExistence type="inferred from homology"/>